<gene>
    <name evidence="1" type="primary">lpxH</name>
    <name type="ordered locus">SEN0516</name>
</gene>
<feature type="chain" id="PRO_1000129532" description="UDP-2,3-diacylglucosamine hydrolase">
    <location>
        <begin position="1"/>
        <end position="240"/>
    </location>
</feature>
<feature type="binding site" evidence="1">
    <location>
        <position position="8"/>
    </location>
    <ligand>
        <name>Mn(2+)</name>
        <dbReference type="ChEBI" id="CHEBI:29035"/>
        <label>1</label>
    </ligand>
</feature>
<feature type="binding site" evidence="1">
    <location>
        <position position="10"/>
    </location>
    <ligand>
        <name>Mn(2+)</name>
        <dbReference type="ChEBI" id="CHEBI:29035"/>
        <label>1</label>
    </ligand>
</feature>
<feature type="binding site" evidence="1">
    <location>
        <position position="41"/>
    </location>
    <ligand>
        <name>Mn(2+)</name>
        <dbReference type="ChEBI" id="CHEBI:29035"/>
        <label>1</label>
    </ligand>
</feature>
<feature type="binding site" evidence="1">
    <location>
        <position position="41"/>
    </location>
    <ligand>
        <name>Mn(2+)</name>
        <dbReference type="ChEBI" id="CHEBI:29035"/>
        <label>2</label>
    </ligand>
</feature>
<feature type="binding site" evidence="1">
    <location>
        <begin position="79"/>
        <end position="80"/>
    </location>
    <ligand>
        <name>substrate</name>
    </ligand>
</feature>
<feature type="binding site" evidence="1">
    <location>
        <position position="79"/>
    </location>
    <ligand>
        <name>Mn(2+)</name>
        <dbReference type="ChEBI" id="CHEBI:29035"/>
        <label>2</label>
    </ligand>
</feature>
<feature type="binding site" evidence="1">
    <location>
        <position position="114"/>
    </location>
    <ligand>
        <name>Mn(2+)</name>
        <dbReference type="ChEBI" id="CHEBI:29035"/>
        <label>2</label>
    </ligand>
</feature>
<feature type="binding site" evidence="1">
    <location>
        <position position="122"/>
    </location>
    <ligand>
        <name>substrate</name>
    </ligand>
</feature>
<feature type="binding site" evidence="1">
    <location>
        <position position="160"/>
    </location>
    <ligand>
        <name>substrate</name>
    </ligand>
</feature>
<feature type="binding site" evidence="1">
    <location>
        <position position="164"/>
    </location>
    <ligand>
        <name>substrate</name>
    </ligand>
</feature>
<feature type="binding site" evidence="1">
    <location>
        <position position="167"/>
    </location>
    <ligand>
        <name>substrate</name>
    </ligand>
</feature>
<feature type="binding site" evidence="1">
    <location>
        <position position="195"/>
    </location>
    <ligand>
        <name>Mn(2+)</name>
        <dbReference type="ChEBI" id="CHEBI:29035"/>
        <label>2</label>
    </ligand>
</feature>
<feature type="binding site" evidence="1">
    <location>
        <position position="195"/>
    </location>
    <ligand>
        <name>substrate</name>
    </ligand>
</feature>
<feature type="binding site" evidence="1">
    <location>
        <position position="197"/>
    </location>
    <ligand>
        <name>Mn(2+)</name>
        <dbReference type="ChEBI" id="CHEBI:29035"/>
        <label>1</label>
    </ligand>
</feature>
<organism>
    <name type="scientific">Salmonella enteritidis PT4 (strain P125109)</name>
    <dbReference type="NCBI Taxonomy" id="550537"/>
    <lineage>
        <taxon>Bacteria</taxon>
        <taxon>Pseudomonadati</taxon>
        <taxon>Pseudomonadota</taxon>
        <taxon>Gammaproteobacteria</taxon>
        <taxon>Enterobacterales</taxon>
        <taxon>Enterobacteriaceae</taxon>
        <taxon>Salmonella</taxon>
    </lineage>
</organism>
<dbReference type="EC" id="3.6.1.54" evidence="1"/>
<dbReference type="EMBL" id="AM933172">
    <property type="protein sequence ID" value="CAR32101.1"/>
    <property type="molecule type" value="Genomic_DNA"/>
</dbReference>
<dbReference type="RefSeq" id="WP_000212289.1">
    <property type="nucleotide sequence ID" value="NC_011294.1"/>
</dbReference>
<dbReference type="SMR" id="B5QUU8"/>
<dbReference type="KEGG" id="set:SEN0516"/>
<dbReference type="HOGENOM" id="CLU_074586_0_0_6"/>
<dbReference type="UniPathway" id="UPA00359">
    <property type="reaction ID" value="UER00480"/>
</dbReference>
<dbReference type="Proteomes" id="UP000000613">
    <property type="component" value="Chromosome"/>
</dbReference>
<dbReference type="GO" id="GO:0005737">
    <property type="term" value="C:cytoplasm"/>
    <property type="evidence" value="ECO:0007669"/>
    <property type="project" value="InterPro"/>
</dbReference>
<dbReference type="GO" id="GO:0019897">
    <property type="term" value="C:extrinsic component of plasma membrane"/>
    <property type="evidence" value="ECO:0007669"/>
    <property type="project" value="UniProtKB-UniRule"/>
</dbReference>
<dbReference type="GO" id="GO:0030145">
    <property type="term" value="F:manganese ion binding"/>
    <property type="evidence" value="ECO:0007669"/>
    <property type="project" value="UniProtKB-UniRule"/>
</dbReference>
<dbReference type="GO" id="GO:0008758">
    <property type="term" value="F:UDP-2,3-diacylglucosamine hydrolase activity"/>
    <property type="evidence" value="ECO:0007669"/>
    <property type="project" value="UniProtKB-UniRule"/>
</dbReference>
<dbReference type="GO" id="GO:0009245">
    <property type="term" value="P:lipid A biosynthetic process"/>
    <property type="evidence" value="ECO:0007669"/>
    <property type="project" value="UniProtKB-UniRule"/>
</dbReference>
<dbReference type="CDD" id="cd07398">
    <property type="entry name" value="MPP_YbbF-LpxH"/>
    <property type="match status" value="1"/>
</dbReference>
<dbReference type="FunFam" id="3.60.21.10:FF:000012">
    <property type="entry name" value="UDP-2,3-diacylglucosamine hydrolase"/>
    <property type="match status" value="1"/>
</dbReference>
<dbReference type="Gene3D" id="3.60.21.10">
    <property type="match status" value="1"/>
</dbReference>
<dbReference type="HAMAP" id="MF_00575">
    <property type="entry name" value="LpxH"/>
    <property type="match status" value="1"/>
</dbReference>
<dbReference type="InterPro" id="IPR004843">
    <property type="entry name" value="Calcineurin-like_PHP_ApaH"/>
</dbReference>
<dbReference type="InterPro" id="IPR043461">
    <property type="entry name" value="LpxH-like"/>
</dbReference>
<dbReference type="InterPro" id="IPR029052">
    <property type="entry name" value="Metallo-depent_PP-like"/>
</dbReference>
<dbReference type="InterPro" id="IPR010138">
    <property type="entry name" value="UDP-diacylglucosamine_Hdrlase"/>
</dbReference>
<dbReference type="NCBIfam" id="TIGR01854">
    <property type="entry name" value="lipid_A_lpxH"/>
    <property type="match status" value="1"/>
</dbReference>
<dbReference type="NCBIfam" id="NF003743">
    <property type="entry name" value="PRK05340.1"/>
    <property type="match status" value="1"/>
</dbReference>
<dbReference type="PANTHER" id="PTHR34990:SF1">
    <property type="entry name" value="UDP-2,3-DIACYLGLUCOSAMINE HYDROLASE"/>
    <property type="match status" value="1"/>
</dbReference>
<dbReference type="PANTHER" id="PTHR34990">
    <property type="entry name" value="UDP-2,3-DIACYLGLUCOSAMINE HYDROLASE-RELATED"/>
    <property type="match status" value="1"/>
</dbReference>
<dbReference type="Pfam" id="PF00149">
    <property type="entry name" value="Metallophos"/>
    <property type="match status" value="1"/>
</dbReference>
<dbReference type="SUPFAM" id="SSF56300">
    <property type="entry name" value="Metallo-dependent phosphatases"/>
    <property type="match status" value="1"/>
</dbReference>
<protein>
    <recommendedName>
        <fullName evidence="1">UDP-2,3-diacylglucosamine hydrolase</fullName>
        <ecNumber evidence="1">3.6.1.54</ecNumber>
    </recommendedName>
    <alternativeName>
        <fullName evidence="1">UDP-2,3-diacylglucosamine diphosphatase</fullName>
    </alternativeName>
</protein>
<keyword id="KW-0997">Cell inner membrane</keyword>
<keyword id="KW-1003">Cell membrane</keyword>
<keyword id="KW-0378">Hydrolase</keyword>
<keyword id="KW-0441">Lipid A biosynthesis</keyword>
<keyword id="KW-0444">Lipid biosynthesis</keyword>
<keyword id="KW-0443">Lipid metabolism</keyword>
<keyword id="KW-0464">Manganese</keyword>
<keyword id="KW-0472">Membrane</keyword>
<keyword id="KW-0479">Metal-binding</keyword>
<accession>B5QUU8</accession>
<comment type="function">
    <text evidence="1">Hydrolyzes the pyrophosphate bond of UDP-2,3-diacylglucosamine to yield 2,3-diacylglucosamine 1-phosphate (lipid X) and UMP by catalyzing the attack of water at the alpha-P atom. Involved in the biosynthesis of lipid A, a phosphorylated glycolipid that anchors the lipopolysaccharide to the outer membrane of the cell.</text>
</comment>
<comment type="catalytic activity">
    <reaction evidence="1">
        <text>UDP-2-N,3-O-bis[(3R)-3-hydroxytetradecanoyl]-alpha-D-glucosamine + H2O = 2-N,3-O-bis[(3R)-3-hydroxytetradecanoyl]-alpha-D-glucosaminyl 1-phosphate + UMP + 2 H(+)</text>
        <dbReference type="Rhea" id="RHEA:25213"/>
        <dbReference type="ChEBI" id="CHEBI:15377"/>
        <dbReference type="ChEBI" id="CHEBI:15378"/>
        <dbReference type="ChEBI" id="CHEBI:57865"/>
        <dbReference type="ChEBI" id="CHEBI:57957"/>
        <dbReference type="ChEBI" id="CHEBI:78847"/>
        <dbReference type="EC" id="3.6.1.54"/>
    </reaction>
</comment>
<comment type="cofactor">
    <cofactor evidence="1">
        <name>Mn(2+)</name>
        <dbReference type="ChEBI" id="CHEBI:29035"/>
    </cofactor>
    <text evidence="1">Binds 2 Mn(2+) ions per subunit in a binuclear metal center.</text>
</comment>
<comment type="pathway">
    <text evidence="1">Glycolipid biosynthesis; lipid IV(A) biosynthesis; lipid IV(A) from (3R)-3-hydroxytetradecanoyl-[acyl-carrier-protein] and UDP-N-acetyl-alpha-D-glucosamine: step 4/6.</text>
</comment>
<comment type="subcellular location">
    <subcellularLocation>
        <location evidence="1">Cell inner membrane</location>
        <topology evidence="1">Peripheral membrane protein</topology>
        <orientation evidence="1">Cytoplasmic side</orientation>
    </subcellularLocation>
</comment>
<comment type="similarity">
    <text evidence="1">Belongs to the LpxH family.</text>
</comment>
<proteinExistence type="inferred from homology"/>
<name>LPXH_SALEP</name>
<sequence length="240" mass="26966">MATLFIADLHLQTEEPAIVAGFLRFLAVEARQADALYILGDLFEAWIGDDDPNPLHREMAVAIKSLVDSGVPCFFIHGNRDFLIGKRFARESGMTLLPQEKVLDLYGRNVLIMHGDTLCTDDAGYQAFRAKVHNPWVQRLFLTLPLFIRRRIAARMRAGSKAANSSKSLDIMDVNAQTVVAEMEKHRVQWLIHGHTHRPAVHELSANDQPAFRVVLGAWHHEGSMVKVTPDNVELIAFPL</sequence>
<evidence type="ECO:0000255" key="1">
    <source>
        <dbReference type="HAMAP-Rule" id="MF_00575"/>
    </source>
</evidence>
<reference key="1">
    <citation type="journal article" date="2008" name="Genome Res.">
        <title>Comparative genome analysis of Salmonella enteritidis PT4 and Salmonella gallinarum 287/91 provides insights into evolutionary and host adaptation pathways.</title>
        <authorList>
            <person name="Thomson N.R."/>
            <person name="Clayton D.J."/>
            <person name="Windhorst D."/>
            <person name="Vernikos G."/>
            <person name="Davidson S."/>
            <person name="Churcher C."/>
            <person name="Quail M.A."/>
            <person name="Stevens M."/>
            <person name="Jones M.A."/>
            <person name="Watson M."/>
            <person name="Barron A."/>
            <person name="Layton A."/>
            <person name="Pickard D."/>
            <person name="Kingsley R.A."/>
            <person name="Bignell A."/>
            <person name="Clark L."/>
            <person name="Harris B."/>
            <person name="Ormond D."/>
            <person name="Abdellah Z."/>
            <person name="Brooks K."/>
            <person name="Cherevach I."/>
            <person name="Chillingworth T."/>
            <person name="Woodward J."/>
            <person name="Norberczak H."/>
            <person name="Lord A."/>
            <person name="Arrowsmith C."/>
            <person name="Jagels K."/>
            <person name="Moule S."/>
            <person name="Mungall K."/>
            <person name="Saunders M."/>
            <person name="Whitehead S."/>
            <person name="Chabalgoity J.A."/>
            <person name="Maskell D."/>
            <person name="Humphreys T."/>
            <person name="Roberts M."/>
            <person name="Barrow P.A."/>
            <person name="Dougan G."/>
            <person name="Parkhill J."/>
        </authorList>
    </citation>
    <scope>NUCLEOTIDE SEQUENCE [LARGE SCALE GENOMIC DNA]</scope>
    <source>
        <strain>P125109</strain>
    </source>
</reference>